<name>AROQ_YERP3</name>
<proteinExistence type="inferred from homology"/>
<comment type="function">
    <text evidence="1">Catalyzes a trans-dehydration via an enolate intermediate.</text>
</comment>
<comment type="catalytic activity">
    <reaction evidence="1">
        <text>3-dehydroquinate = 3-dehydroshikimate + H2O</text>
        <dbReference type="Rhea" id="RHEA:21096"/>
        <dbReference type="ChEBI" id="CHEBI:15377"/>
        <dbReference type="ChEBI" id="CHEBI:16630"/>
        <dbReference type="ChEBI" id="CHEBI:32364"/>
        <dbReference type="EC" id="4.2.1.10"/>
    </reaction>
</comment>
<comment type="pathway">
    <text evidence="1">Metabolic intermediate biosynthesis; chorismate biosynthesis; chorismate from D-erythrose 4-phosphate and phosphoenolpyruvate: step 3/7.</text>
</comment>
<comment type="subunit">
    <text evidence="1">Homododecamer.</text>
</comment>
<comment type="similarity">
    <text evidence="1">Belongs to the type-II 3-dehydroquinase family.</text>
</comment>
<accession>A7FDQ8</accession>
<keyword id="KW-0028">Amino-acid biosynthesis</keyword>
<keyword id="KW-0057">Aromatic amino acid biosynthesis</keyword>
<keyword id="KW-0456">Lyase</keyword>
<organism>
    <name type="scientific">Yersinia pseudotuberculosis serotype O:1b (strain IP 31758)</name>
    <dbReference type="NCBI Taxonomy" id="349747"/>
    <lineage>
        <taxon>Bacteria</taxon>
        <taxon>Pseudomonadati</taxon>
        <taxon>Pseudomonadota</taxon>
        <taxon>Gammaproteobacteria</taxon>
        <taxon>Enterobacterales</taxon>
        <taxon>Yersiniaceae</taxon>
        <taxon>Yersinia</taxon>
    </lineage>
</organism>
<reference key="1">
    <citation type="journal article" date="2007" name="PLoS Genet.">
        <title>The complete genome sequence of Yersinia pseudotuberculosis IP31758, the causative agent of Far East scarlet-like fever.</title>
        <authorList>
            <person name="Eppinger M."/>
            <person name="Rosovitz M.J."/>
            <person name="Fricke W.F."/>
            <person name="Rasko D.A."/>
            <person name="Kokorina G."/>
            <person name="Fayolle C."/>
            <person name="Lindler L.E."/>
            <person name="Carniel E."/>
            <person name="Ravel J."/>
        </authorList>
    </citation>
    <scope>NUCLEOTIDE SEQUENCE [LARGE SCALE GENOMIC DNA]</scope>
    <source>
        <strain>IP 31758</strain>
    </source>
</reference>
<evidence type="ECO:0000255" key="1">
    <source>
        <dbReference type="HAMAP-Rule" id="MF_00169"/>
    </source>
</evidence>
<protein>
    <recommendedName>
        <fullName evidence="1">3-dehydroquinate dehydratase</fullName>
        <shortName evidence="1">3-dehydroquinase</shortName>
        <ecNumber evidence="1">4.2.1.10</ecNumber>
    </recommendedName>
    <alternativeName>
        <fullName evidence="1">Type II DHQase</fullName>
    </alternativeName>
</protein>
<gene>
    <name evidence="1" type="primary">aroQ</name>
    <name type="ordered locus">YpsIP31758_0393</name>
</gene>
<feature type="chain" id="PRO_1000058295" description="3-dehydroquinate dehydratase">
    <location>
        <begin position="1"/>
        <end position="150"/>
    </location>
</feature>
<feature type="active site" description="Proton acceptor" evidence="1">
    <location>
        <position position="26"/>
    </location>
</feature>
<feature type="active site" description="Proton donor" evidence="1">
    <location>
        <position position="103"/>
    </location>
</feature>
<feature type="binding site" evidence="1">
    <location>
        <position position="77"/>
    </location>
    <ligand>
        <name>substrate</name>
    </ligand>
</feature>
<feature type="binding site" evidence="1">
    <location>
        <position position="83"/>
    </location>
    <ligand>
        <name>substrate</name>
    </ligand>
</feature>
<feature type="binding site" evidence="1">
    <location>
        <position position="90"/>
    </location>
    <ligand>
        <name>substrate</name>
    </ligand>
</feature>
<feature type="binding site" evidence="1">
    <location>
        <begin position="104"/>
        <end position="105"/>
    </location>
    <ligand>
        <name>substrate</name>
    </ligand>
</feature>
<feature type="binding site" evidence="1">
    <location>
        <position position="114"/>
    </location>
    <ligand>
        <name>substrate</name>
    </ligand>
</feature>
<feature type="site" description="Transition state stabilizer" evidence="1">
    <location>
        <position position="21"/>
    </location>
</feature>
<dbReference type="EC" id="4.2.1.10" evidence="1"/>
<dbReference type="EMBL" id="CP000720">
    <property type="protein sequence ID" value="ABS46035.1"/>
    <property type="molecule type" value="Genomic_DNA"/>
</dbReference>
<dbReference type="RefSeq" id="WP_002210071.1">
    <property type="nucleotide sequence ID" value="NC_009708.1"/>
</dbReference>
<dbReference type="SMR" id="A7FDQ8"/>
<dbReference type="GeneID" id="57975085"/>
<dbReference type="KEGG" id="ypi:YpsIP31758_0393"/>
<dbReference type="HOGENOM" id="CLU_090968_1_0_6"/>
<dbReference type="UniPathway" id="UPA00053">
    <property type="reaction ID" value="UER00086"/>
</dbReference>
<dbReference type="Proteomes" id="UP000002412">
    <property type="component" value="Chromosome"/>
</dbReference>
<dbReference type="GO" id="GO:0003855">
    <property type="term" value="F:3-dehydroquinate dehydratase activity"/>
    <property type="evidence" value="ECO:0007669"/>
    <property type="project" value="UniProtKB-UniRule"/>
</dbReference>
<dbReference type="GO" id="GO:0008652">
    <property type="term" value="P:amino acid biosynthetic process"/>
    <property type="evidence" value="ECO:0007669"/>
    <property type="project" value="UniProtKB-KW"/>
</dbReference>
<dbReference type="GO" id="GO:0009073">
    <property type="term" value="P:aromatic amino acid family biosynthetic process"/>
    <property type="evidence" value="ECO:0007669"/>
    <property type="project" value="UniProtKB-KW"/>
</dbReference>
<dbReference type="GO" id="GO:0009423">
    <property type="term" value="P:chorismate biosynthetic process"/>
    <property type="evidence" value="ECO:0007669"/>
    <property type="project" value="UniProtKB-UniRule"/>
</dbReference>
<dbReference type="GO" id="GO:0019631">
    <property type="term" value="P:quinate catabolic process"/>
    <property type="evidence" value="ECO:0007669"/>
    <property type="project" value="TreeGrafter"/>
</dbReference>
<dbReference type="CDD" id="cd00466">
    <property type="entry name" value="DHQase_II"/>
    <property type="match status" value="1"/>
</dbReference>
<dbReference type="Gene3D" id="3.40.50.9100">
    <property type="entry name" value="Dehydroquinase, class II"/>
    <property type="match status" value="1"/>
</dbReference>
<dbReference type="HAMAP" id="MF_00169">
    <property type="entry name" value="AroQ"/>
    <property type="match status" value="1"/>
</dbReference>
<dbReference type="InterPro" id="IPR001874">
    <property type="entry name" value="DHquinase_II"/>
</dbReference>
<dbReference type="InterPro" id="IPR018509">
    <property type="entry name" value="DHquinase_II_CS"/>
</dbReference>
<dbReference type="InterPro" id="IPR036441">
    <property type="entry name" value="DHquinase_II_sf"/>
</dbReference>
<dbReference type="NCBIfam" id="TIGR01088">
    <property type="entry name" value="aroQ"/>
    <property type="match status" value="1"/>
</dbReference>
<dbReference type="NCBIfam" id="NF003804">
    <property type="entry name" value="PRK05395.1-1"/>
    <property type="match status" value="1"/>
</dbReference>
<dbReference type="NCBIfam" id="NF003805">
    <property type="entry name" value="PRK05395.1-2"/>
    <property type="match status" value="1"/>
</dbReference>
<dbReference type="NCBIfam" id="NF003806">
    <property type="entry name" value="PRK05395.1-3"/>
    <property type="match status" value="1"/>
</dbReference>
<dbReference type="NCBIfam" id="NF003807">
    <property type="entry name" value="PRK05395.1-4"/>
    <property type="match status" value="1"/>
</dbReference>
<dbReference type="PANTHER" id="PTHR21272">
    <property type="entry name" value="CATABOLIC 3-DEHYDROQUINASE"/>
    <property type="match status" value="1"/>
</dbReference>
<dbReference type="PANTHER" id="PTHR21272:SF3">
    <property type="entry name" value="CATABOLIC 3-DEHYDROQUINASE"/>
    <property type="match status" value="1"/>
</dbReference>
<dbReference type="Pfam" id="PF01220">
    <property type="entry name" value="DHquinase_II"/>
    <property type="match status" value="1"/>
</dbReference>
<dbReference type="PIRSF" id="PIRSF001399">
    <property type="entry name" value="DHquinase_II"/>
    <property type="match status" value="1"/>
</dbReference>
<dbReference type="SUPFAM" id="SSF52304">
    <property type="entry name" value="Type II 3-dehydroquinate dehydratase"/>
    <property type="match status" value="1"/>
</dbReference>
<dbReference type="PROSITE" id="PS01029">
    <property type="entry name" value="DEHYDROQUINASE_II"/>
    <property type="match status" value="1"/>
</dbReference>
<sequence>MSDKFHILLLNGPNLNLLGTREPEKYGYTTLAEIVSQLEIQAQGMDVALSHLQSNAEHALIDSIHQARGNTDFILINPAAFTHTSVALRDALLGVQIPFIEIHLSNVHAREPFRHHSYLSDIAVGVICGLGADGYNFALQAAVNRLSKSN</sequence>